<keyword id="KW-0687">Ribonucleoprotein</keyword>
<keyword id="KW-0689">Ribosomal protein</keyword>
<sequence>MHILDSVDKASLRSDIPDFRAGDTVKVHVNIVEGSRSRIQVFQGIVIGRQGEGVGETFCVRKVSFQVGVERTFPVHSPVIDHIEVVTRGDVRRAKLYFLRDLRGKKAKIKEKRS</sequence>
<name>RL19_CLAM3</name>
<reference key="1">
    <citation type="journal article" date="2008" name="J. Bacteriol.">
        <title>The genome sequence of the tomato-pathogenic actinomycete Clavibacter michiganensis subsp. michiganensis NCPPB382 reveals a large island involved in pathogenicity.</title>
        <authorList>
            <person name="Gartemann K.-H."/>
            <person name="Abt B."/>
            <person name="Bekel T."/>
            <person name="Burger A."/>
            <person name="Engemann J."/>
            <person name="Fluegel M."/>
            <person name="Gaigalat L."/>
            <person name="Goesmann A."/>
            <person name="Graefen I."/>
            <person name="Kalinowski J."/>
            <person name="Kaup O."/>
            <person name="Kirchner O."/>
            <person name="Krause L."/>
            <person name="Linke B."/>
            <person name="McHardy A."/>
            <person name="Meyer F."/>
            <person name="Pohle S."/>
            <person name="Rueckert C."/>
            <person name="Schneiker S."/>
            <person name="Zellermann E.-M."/>
            <person name="Puehler A."/>
            <person name="Eichenlaub R."/>
            <person name="Kaiser O."/>
            <person name="Bartels D."/>
        </authorList>
    </citation>
    <scope>NUCLEOTIDE SEQUENCE [LARGE SCALE GENOMIC DNA]</scope>
    <source>
        <strain>NCPPB 382</strain>
    </source>
</reference>
<gene>
    <name evidence="1" type="primary">rplS</name>
    <name type="ordered locus">CMM_1373</name>
</gene>
<evidence type="ECO:0000255" key="1">
    <source>
        <dbReference type="HAMAP-Rule" id="MF_00402"/>
    </source>
</evidence>
<evidence type="ECO:0000305" key="2"/>
<protein>
    <recommendedName>
        <fullName evidence="1">Large ribosomal subunit protein bL19</fullName>
    </recommendedName>
    <alternativeName>
        <fullName evidence="2">50S ribosomal protein L19</fullName>
    </alternativeName>
</protein>
<comment type="function">
    <text evidence="1">This protein is located at the 30S-50S ribosomal subunit interface and may play a role in the structure and function of the aminoacyl-tRNA binding site.</text>
</comment>
<comment type="similarity">
    <text evidence="1">Belongs to the bacterial ribosomal protein bL19 family.</text>
</comment>
<organism>
    <name type="scientific">Clavibacter michiganensis subsp. michiganensis (strain NCPPB 382)</name>
    <dbReference type="NCBI Taxonomy" id="443906"/>
    <lineage>
        <taxon>Bacteria</taxon>
        <taxon>Bacillati</taxon>
        <taxon>Actinomycetota</taxon>
        <taxon>Actinomycetes</taxon>
        <taxon>Micrococcales</taxon>
        <taxon>Microbacteriaceae</taxon>
        <taxon>Clavibacter</taxon>
    </lineage>
</organism>
<proteinExistence type="inferred from homology"/>
<feature type="chain" id="PRO_1000049659" description="Large ribosomal subunit protein bL19">
    <location>
        <begin position="1"/>
        <end position="114"/>
    </location>
</feature>
<dbReference type="EMBL" id="AM711867">
    <property type="protein sequence ID" value="CAN01418.1"/>
    <property type="molecule type" value="Genomic_DNA"/>
</dbReference>
<dbReference type="RefSeq" id="WP_012038059.1">
    <property type="nucleotide sequence ID" value="NC_009480.1"/>
</dbReference>
<dbReference type="SMR" id="A5CQR4"/>
<dbReference type="KEGG" id="cmi:CMM_1373"/>
<dbReference type="eggNOG" id="COG0335">
    <property type="taxonomic scope" value="Bacteria"/>
</dbReference>
<dbReference type="HOGENOM" id="CLU_103507_2_1_11"/>
<dbReference type="OrthoDB" id="9803541at2"/>
<dbReference type="Proteomes" id="UP000001564">
    <property type="component" value="Chromosome"/>
</dbReference>
<dbReference type="GO" id="GO:0022625">
    <property type="term" value="C:cytosolic large ribosomal subunit"/>
    <property type="evidence" value="ECO:0007669"/>
    <property type="project" value="TreeGrafter"/>
</dbReference>
<dbReference type="GO" id="GO:0003735">
    <property type="term" value="F:structural constituent of ribosome"/>
    <property type="evidence" value="ECO:0007669"/>
    <property type="project" value="InterPro"/>
</dbReference>
<dbReference type="GO" id="GO:0006412">
    <property type="term" value="P:translation"/>
    <property type="evidence" value="ECO:0007669"/>
    <property type="project" value="UniProtKB-UniRule"/>
</dbReference>
<dbReference type="FunFam" id="2.30.30.790:FF:000001">
    <property type="entry name" value="50S ribosomal protein L19"/>
    <property type="match status" value="1"/>
</dbReference>
<dbReference type="Gene3D" id="2.30.30.790">
    <property type="match status" value="1"/>
</dbReference>
<dbReference type="HAMAP" id="MF_00402">
    <property type="entry name" value="Ribosomal_bL19"/>
    <property type="match status" value="1"/>
</dbReference>
<dbReference type="InterPro" id="IPR001857">
    <property type="entry name" value="Ribosomal_bL19"/>
</dbReference>
<dbReference type="InterPro" id="IPR018257">
    <property type="entry name" value="Ribosomal_bL19_CS"/>
</dbReference>
<dbReference type="InterPro" id="IPR038657">
    <property type="entry name" value="Ribosomal_bL19_sf"/>
</dbReference>
<dbReference type="InterPro" id="IPR008991">
    <property type="entry name" value="Translation_prot_SH3-like_sf"/>
</dbReference>
<dbReference type="NCBIfam" id="TIGR01024">
    <property type="entry name" value="rplS_bact"/>
    <property type="match status" value="1"/>
</dbReference>
<dbReference type="PANTHER" id="PTHR15680:SF9">
    <property type="entry name" value="LARGE RIBOSOMAL SUBUNIT PROTEIN BL19M"/>
    <property type="match status" value="1"/>
</dbReference>
<dbReference type="PANTHER" id="PTHR15680">
    <property type="entry name" value="RIBOSOMAL PROTEIN L19"/>
    <property type="match status" value="1"/>
</dbReference>
<dbReference type="Pfam" id="PF01245">
    <property type="entry name" value="Ribosomal_L19"/>
    <property type="match status" value="1"/>
</dbReference>
<dbReference type="PIRSF" id="PIRSF002191">
    <property type="entry name" value="Ribosomal_L19"/>
    <property type="match status" value="1"/>
</dbReference>
<dbReference type="PRINTS" id="PR00061">
    <property type="entry name" value="RIBOSOMALL19"/>
</dbReference>
<dbReference type="SUPFAM" id="SSF50104">
    <property type="entry name" value="Translation proteins SH3-like domain"/>
    <property type="match status" value="1"/>
</dbReference>
<dbReference type="PROSITE" id="PS01015">
    <property type="entry name" value="RIBOSOMAL_L19"/>
    <property type="match status" value="1"/>
</dbReference>
<accession>A5CQR4</accession>